<reference key="1">
    <citation type="journal article" date="2003" name="Plant Physiol.">
        <title>Differential metal selectivity and gene expression of two zinc transporters from rice.</title>
        <authorList>
            <person name="Ramesh S.A."/>
            <person name="Shin R."/>
            <person name="Eide D.J."/>
            <person name="Schachtman D.P."/>
        </authorList>
    </citation>
    <scope>NUCLEOTIDE SEQUENCE [MRNA]</scope>
    <scope>FUNCTION</scope>
    <scope>BIOPHYSICOCHEMICAL PROPERTIES</scope>
    <scope>TISSUE SPECIFICITY</scope>
    <source>
        <strain>cv. Nipponbare</strain>
    </source>
</reference>
<reference key="2">
    <citation type="journal article" date="2002" name="Nature">
        <title>The genome sequence and structure of rice chromosome 1.</title>
        <authorList>
            <person name="Sasaki T."/>
            <person name="Matsumoto T."/>
            <person name="Yamamoto K."/>
            <person name="Sakata K."/>
            <person name="Baba T."/>
            <person name="Katayose Y."/>
            <person name="Wu J."/>
            <person name="Niimura Y."/>
            <person name="Cheng Z."/>
            <person name="Nagamura Y."/>
            <person name="Antonio B.A."/>
            <person name="Kanamori H."/>
            <person name="Hosokawa S."/>
            <person name="Masukawa M."/>
            <person name="Arikawa K."/>
            <person name="Chiden Y."/>
            <person name="Hayashi M."/>
            <person name="Okamoto M."/>
            <person name="Ando T."/>
            <person name="Aoki H."/>
            <person name="Arita K."/>
            <person name="Hamada M."/>
            <person name="Harada C."/>
            <person name="Hijishita S."/>
            <person name="Honda M."/>
            <person name="Ichikawa Y."/>
            <person name="Idonuma A."/>
            <person name="Iijima M."/>
            <person name="Ikeda M."/>
            <person name="Ikeno M."/>
            <person name="Ito S."/>
            <person name="Ito T."/>
            <person name="Ito Y."/>
            <person name="Ito Y."/>
            <person name="Iwabuchi A."/>
            <person name="Kamiya K."/>
            <person name="Karasawa W."/>
            <person name="Katagiri S."/>
            <person name="Kikuta A."/>
            <person name="Kobayashi N."/>
            <person name="Kono I."/>
            <person name="Machita K."/>
            <person name="Maehara T."/>
            <person name="Mizuno H."/>
            <person name="Mizubayashi T."/>
            <person name="Mukai Y."/>
            <person name="Nagasaki H."/>
            <person name="Nakashima M."/>
            <person name="Nakama Y."/>
            <person name="Nakamichi Y."/>
            <person name="Nakamura M."/>
            <person name="Namiki N."/>
            <person name="Negishi M."/>
            <person name="Ohta I."/>
            <person name="Ono N."/>
            <person name="Saji S."/>
            <person name="Sakai K."/>
            <person name="Shibata M."/>
            <person name="Shimokawa T."/>
            <person name="Shomura A."/>
            <person name="Song J."/>
            <person name="Takazaki Y."/>
            <person name="Terasawa K."/>
            <person name="Tsuji K."/>
            <person name="Waki K."/>
            <person name="Yamagata H."/>
            <person name="Yamane H."/>
            <person name="Yoshiki S."/>
            <person name="Yoshihara R."/>
            <person name="Yukawa K."/>
            <person name="Zhong H."/>
            <person name="Iwama H."/>
            <person name="Endo T."/>
            <person name="Ito H."/>
            <person name="Hahn J.H."/>
            <person name="Kim H.-I."/>
            <person name="Eun M.-Y."/>
            <person name="Yano M."/>
            <person name="Jiang J."/>
            <person name="Gojobori T."/>
        </authorList>
    </citation>
    <scope>NUCLEOTIDE SEQUENCE [LARGE SCALE GENOMIC DNA]</scope>
    <source>
        <strain>cv. Nipponbare</strain>
    </source>
</reference>
<reference key="3">
    <citation type="journal article" date="2005" name="Nature">
        <title>The map-based sequence of the rice genome.</title>
        <authorList>
            <consortium name="International rice genome sequencing project (IRGSP)"/>
        </authorList>
    </citation>
    <scope>NUCLEOTIDE SEQUENCE [LARGE SCALE GENOMIC DNA]</scope>
    <source>
        <strain>cv. Nipponbare</strain>
    </source>
</reference>
<reference key="4">
    <citation type="journal article" date="2008" name="Nucleic Acids Res.">
        <title>The rice annotation project database (RAP-DB): 2008 update.</title>
        <authorList>
            <consortium name="The rice annotation project (RAP)"/>
        </authorList>
    </citation>
    <scope>GENOME REANNOTATION</scope>
    <source>
        <strain>cv. Nipponbare</strain>
    </source>
</reference>
<reference key="5">
    <citation type="journal article" date="2013" name="Rice">
        <title>Improvement of the Oryza sativa Nipponbare reference genome using next generation sequence and optical map data.</title>
        <authorList>
            <person name="Kawahara Y."/>
            <person name="de la Bastide M."/>
            <person name="Hamilton J.P."/>
            <person name="Kanamori H."/>
            <person name="McCombie W.R."/>
            <person name="Ouyang S."/>
            <person name="Schwartz D.C."/>
            <person name="Tanaka T."/>
            <person name="Wu J."/>
            <person name="Zhou S."/>
            <person name="Childs K.L."/>
            <person name="Davidson R.M."/>
            <person name="Lin H."/>
            <person name="Quesada-Ocampo L."/>
            <person name="Vaillancourt B."/>
            <person name="Sakai H."/>
            <person name="Lee S.S."/>
            <person name="Kim J."/>
            <person name="Numa H."/>
            <person name="Itoh T."/>
            <person name="Buell C.R."/>
            <person name="Matsumoto T."/>
        </authorList>
    </citation>
    <scope>GENOME REANNOTATION</scope>
    <source>
        <strain>cv. Nipponbare</strain>
    </source>
</reference>
<dbReference type="EMBL" id="AY302058">
    <property type="protein sequence ID" value="AAP59425.1"/>
    <property type="molecule type" value="mRNA"/>
</dbReference>
<dbReference type="EMBL" id="AP003277">
    <property type="protein sequence ID" value="BAB63683.1"/>
    <property type="molecule type" value="Genomic_DNA"/>
</dbReference>
<dbReference type="EMBL" id="AP008207">
    <property type="protein sequence ID" value="BAF07454.1"/>
    <property type="molecule type" value="Genomic_DNA"/>
</dbReference>
<dbReference type="EMBL" id="AP014957">
    <property type="protein sequence ID" value="BAS76436.1"/>
    <property type="molecule type" value="Genomic_DNA"/>
</dbReference>
<dbReference type="RefSeq" id="XP_015633357.1">
    <property type="nucleotide sequence ID" value="XM_015777871.1"/>
</dbReference>
<dbReference type="SMR" id="Q94DG6"/>
<dbReference type="FunCoup" id="Q94DG6">
    <property type="interactions" value="140"/>
</dbReference>
<dbReference type="STRING" id="39947.Q94DG6"/>
<dbReference type="TCDB" id="2.A.5.3.4">
    <property type="family name" value="the zinc (zn(2+))-iron (fe(2+)) permease (zip) family"/>
</dbReference>
<dbReference type="PaxDb" id="39947-Q94DG6"/>
<dbReference type="EnsemblPlants" id="Os01t0972200-01">
    <property type="protein sequence ID" value="Os01t0972200-01"/>
    <property type="gene ID" value="Os01g0972200"/>
</dbReference>
<dbReference type="Gramene" id="Os01t0972200-01">
    <property type="protein sequence ID" value="Os01t0972200-01"/>
    <property type="gene ID" value="Os01g0972200"/>
</dbReference>
<dbReference type="KEGG" id="dosa:Os01g0972200"/>
<dbReference type="eggNOG" id="KOG1558">
    <property type="taxonomic scope" value="Eukaryota"/>
</dbReference>
<dbReference type="HOGENOM" id="CLU_046211_0_0_1"/>
<dbReference type="InParanoid" id="Q94DG6"/>
<dbReference type="OMA" id="EEWGGTH"/>
<dbReference type="OrthoDB" id="448280at2759"/>
<dbReference type="Proteomes" id="UP000000763">
    <property type="component" value="Chromosome 1"/>
</dbReference>
<dbReference type="Proteomes" id="UP000059680">
    <property type="component" value="Chromosome 1"/>
</dbReference>
<dbReference type="GO" id="GO:0016020">
    <property type="term" value="C:membrane"/>
    <property type="evidence" value="ECO:0000318"/>
    <property type="project" value="GO_Central"/>
</dbReference>
<dbReference type="GO" id="GO:0005886">
    <property type="term" value="C:plasma membrane"/>
    <property type="evidence" value="ECO:0007669"/>
    <property type="project" value="UniProtKB-SubCell"/>
</dbReference>
<dbReference type="GO" id="GO:0005385">
    <property type="term" value="F:zinc ion transmembrane transporter activity"/>
    <property type="evidence" value="ECO:0000318"/>
    <property type="project" value="GO_Central"/>
</dbReference>
<dbReference type="GO" id="GO:0071577">
    <property type="term" value="P:zinc ion transmembrane transport"/>
    <property type="evidence" value="ECO:0000318"/>
    <property type="project" value="GO_Central"/>
</dbReference>
<dbReference type="GO" id="GO:0006829">
    <property type="term" value="P:zinc ion transport"/>
    <property type="evidence" value="ECO:0000314"/>
    <property type="project" value="UniProtKB"/>
</dbReference>
<dbReference type="InterPro" id="IPR003689">
    <property type="entry name" value="ZIP"/>
</dbReference>
<dbReference type="PANTHER" id="PTHR11040">
    <property type="entry name" value="ZINC/IRON TRANSPORTER"/>
    <property type="match status" value="1"/>
</dbReference>
<dbReference type="PANTHER" id="PTHR11040:SF140">
    <property type="entry name" value="ZRT (ZRT), IRT- (IRT-) LIKE PROTEIN TRANSPORTER"/>
    <property type="match status" value="1"/>
</dbReference>
<dbReference type="Pfam" id="PF02535">
    <property type="entry name" value="Zip"/>
    <property type="match status" value="1"/>
</dbReference>
<evidence type="ECO:0000255" key="1"/>
<evidence type="ECO:0000269" key="2">
    <source>
    </source>
</evidence>
<evidence type="ECO:0000305" key="3"/>
<keyword id="KW-1003">Cell membrane</keyword>
<keyword id="KW-0406">Ion transport</keyword>
<keyword id="KW-0472">Membrane</keyword>
<keyword id="KW-1185">Reference proteome</keyword>
<keyword id="KW-0732">Signal</keyword>
<keyword id="KW-0812">Transmembrane</keyword>
<keyword id="KW-1133">Transmembrane helix</keyword>
<keyword id="KW-0813">Transport</keyword>
<keyword id="KW-0862">Zinc</keyword>
<keyword id="KW-0864">Zinc transport</keyword>
<organism>
    <name type="scientific">Oryza sativa subsp. japonica</name>
    <name type="common">Rice</name>
    <dbReference type="NCBI Taxonomy" id="39947"/>
    <lineage>
        <taxon>Eukaryota</taxon>
        <taxon>Viridiplantae</taxon>
        <taxon>Streptophyta</taxon>
        <taxon>Embryophyta</taxon>
        <taxon>Tracheophyta</taxon>
        <taxon>Spermatophyta</taxon>
        <taxon>Magnoliopsida</taxon>
        <taxon>Liliopsida</taxon>
        <taxon>Poales</taxon>
        <taxon>Poaceae</taxon>
        <taxon>BOP clade</taxon>
        <taxon>Oryzoideae</taxon>
        <taxon>Oryzeae</taxon>
        <taxon>Oryzinae</taxon>
        <taxon>Oryza</taxon>
        <taxon>Oryza sativa</taxon>
    </lineage>
</organism>
<accession>Q94DG6</accession>
<accession>A0A0P0VDH4</accession>
<accession>Q7XZS7</accession>
<comment type="function">
    <text evidence="2">Zinc transporter that may mediate zinc uptake from the rhizosphere. May also transport other divalent cations.</text>
</comment>
<comment type="biophysicochemical properties">
    <kinetics>
        <KM evidence="2">16.3 uM for Zn(2+)</KM>
    </kinetics>
</comment>
<comment type="subcellular location">
    <subcellularLocation>
        <location evidence="3">Cell membrane</location>
        <topology evidence="3">Multi-pass membrane protein</topology>
    </subcellularLocation>
</comment>
<comment type="tissue specificity">
    <text evidence="2">Expressed in vascular bundles of roots and leaves.</text>
</comment>
<comment type="induction">
    <text>By zinc deficiency in roots and shoots.</text>
</comment>
<comment type="similarity">
    <text evidence="3">Belongs to the ZIP transporter (TC 2.A.5) family.</text>
</comment>
<feature type="signal peptide" evidence="1">
    <location>
        <begin position="1"/>
        <end position="29"/>
    </location>
</feature>
<feature type="chain" id="PRO_0000398325" description="Zinc transporter 1">
    <location>
        <begin position="30"/>
        <end position="352"/>
    </location>
</feature>
<feature type="topological domain" description="Extracellular" evidence="1">
    <location>
        <begin position="30"/>
        <end position="56"/>
    </location>
</feature>
<feature type="transmembrane region" description="Helical" evidence="1">
    <location>
        <begin position="57"/>
        <end position="77"/>
    </location>
</feature>
<feature type="topological domain" description="Cytoplasmic" evidence="1">
    <location>
        <begin position="78"/>
        <end position="87"/>
    </location>
</feature>
<feature type="transmembrane region" description="Helical" evidence="1">
    <location>
        <begin position="88"/>
        <end position="108"/>
    </location>
</feature>
<feature type="topological domain" description="Extracellular" evidence="1">
    <location>
        <begin position="109"/>
        <end position="127"/>
    </location>
</feature>
<feature type="transmembrane region" description="Helical" evidence="1">
    <location>
        <begin position="128"/>
        <end position="148"/>
    </location>
</feature>
<feature type="topological domain" description="Cytoplasmic" evidence="1">
    <location>
        <begin position="149"/>
        <end position="200"/>
    </location>
</feature>
<feature type="transmembrane region" description="Helical" evidence="1">
    <location>
        <begin position="201"/>
        <end position="221"/>
    </location>
</feature>
<feature type="topological domain" description="Extracellular" evidence="1">
    <location>
        <begin position="222"/>
        <end position="230"/>
    </location>
</feature>
<feature type="transmembrane region" description="Helical" evidence="1">
    <location>
        <begin position="231"/>
        <end position="251"/>
    </location>
</feature>
<feature type="topological domain" description="Cytoplasmic" evidence="1">
    <location>
        <begin position="252"/>
        <end position="262"/>
    </location>
</feature>
<feature type="transmembrane region" description="Helical" evidence="1">
    <location>
        <begin position="263"/>
        <end position="283"/>
    </location>
</feature>
<feature type="topological domain" description="Extracellular" evidence="1">
    <location>
        <begin position="284"/>
        <end position="296"/>
    </location>
</feature>
<feature type="transmembrane region" description="Helical" evidence="1">
    <location>
        <begin position="297"/>
        <end position="317"/>
    </location>
</feature>
<feature type="topological domain" description="Cytoplasmic" evidence="1">
    <location>
        <begin position="318"/>
        <end position="330"/>
    </location>
</feature>
<feature type="transmembrane region" description="Helical" evidence="1">
    <location>
        <begin position="331"/>
        <end position="351"/>
    </location>
</feature>
<feature type="topological domain" description="Extracellular" evidence="1">
    <location>
        <position position="352"/>
    </location>
</feature>
<protein>
    <recommendedName>
        <fullName>Zinc transporter 1</fullName>
    </recommendedName>
    <alternativeName>
        <fullName>ZRT/IRT-like protein 1</fullName>
        <shortName>OsZIP1</shortName>
    </alternativeName>
</protein>
<proteinExistence type="evidence at protein level"/>
<gene>
    <name type="primary">ZIP1</name>
    <name type="ordered locus">Os01g0972200</name>
    <name type="ordered locus">LOC_Os01g74110</name>
    <name type="ORF">P0518C01.26</name>
</gene>
<name>ZIP1_ORYSJ</name>
<sequence length="352" mass="37447">MARTMTMRVSSLLVAVVLLAALSFQACSGHGGINDGDGQVDAPATPASSSGVRSKGLIAVKVWCLVILLVFTFAGGVSPYFYRWNESFLLLGTQFAAGVFLGTALMHFLADSTSTFKGLTTNQYPFSFMLTCVGFLLTMLSDLVIAAVARRSAAAGVSDNQVSEQQQRQQAEGAVMSRKEEEAAAVAHPAMLVRTSSFEDAVLLIVALCFHSVFEGIAIGVSASKSEAWRNLWTIGLHKIFAAVAMGIALLRMIPKRPFLMTVVYSLAFAVSSPVGVGIGIAIDATSQGRAADWTYAISMGLATGVFIYVAINHLIAKGYRPHHPTAADKPLFKFLAVLLGVAVMAVVMIWD</sequence>